<dbReference type="EMBL" id="M55918">
    <property type="protein sequence ID" value="AAA91823.1"/>
    <property type="molecule type" value="Genomic_DNA"/>
</dbReference>
<dbReference type="EMBL" id="M81223">
    <property type="protein sequence ID" value="AAA42883.1"/>
    <property type="molecule type" value="Genomic_DNA"/>
</dbReference>
<dbReference type="PIR" id="B39926">
    <property type="entry name" value="B39926"/>
</dbReference>
<dbReference type="PIR" id="B48343">
    <property type="entry name" value="B48343"/>
</dbReference>
<dbReference type="DIP" id="DIP-45593N"/>
<dbReference type="IntAct" id="Q99152">
    <property type="interactions" value="4"/>
</dbReference>
<dbReference type="MINT" id="Q99152"/>
<dbReference type="Proteomes" id="UP000007528">
    <property type="component" value="Segment"/>
</dbReference>
<dbReference type="GO" id="GO:0042025">
    <property type="term" value="C:host cell nucleus"/>
    <property type="evidence" value="ECO:0007669"/>
    <property type="project" value="UniProtKB-SubCell"/>
</dbReference>
<dbReference type="GO" id="GO:0052151">
    <property type="term" value="P:symbiont-mediated activation of host apoptosis"/>
    <property type="evidence" value="ECO:0007669"/>
    <property type="project" value="InterPro"/>
</dbReference>
<dbReference type="GO" id="GO:0039593">
    <property type="term" value="P:symbiont-mediated perturbation of host exit from mitosis"/>
    <property type="evidence" value="ECO:0007669"/>
    <property type="project" value="UniProtKB-KW"/>
</dbReference>
<dbReference type="InterPro" id="IPR006858">
    <property type="entry name" value="CAV_VP3"/>
</dbReference>
<dbReference type="Pfam" id="PF04771">
    <property type="entry name" value="CAV_VP3"/>
    <property type="match status" value="1"/>
</dbReference>
<protein>
    <recommendedName>
        <fullName>Apoptin</fullName>
    </recommendedName>
</protein>
<evidence type="ECO:0000256" key="1">
    <source>
        <dbReference type="SAM" id="MobiDB-lite"/>
    </source>
</evidence>
<evidence type="ECO:0000269" key="2">
    <source>
    </source>
</evidence>
<evidence type="ECO:0000305" key="3"/>
<reference key="1">
    <citation type="journal article" date="1991" name="J. Virol.">
        <title>Characterization of cloned chicken anemia virus DNA that contains all elements for the infectious replication cycle.</title>
        <authorList>
            <person name="Noteborn M.H.M."/>
            <person name="de Boer G.F."/>
            <person name="van Roozelaar D.J."/>
            <person name="Karreman C."/>
            <person name="Kranenburg O."/>
            <person name="Vos J.G."/>
            <person name="Jeurissen S.H.M."/>
            <person name="Hoeben R.C."/>
            <person name="Zantema A."/>
            <person name="Koch G."/>
            <person name="van Ormondt H."/>
            <person name="van der Eb A.J."/>
        </authorList>
    </citation>
    <scope>NUCLEOTIDE SEQUENCE [GENOMIC DNA]</scope>
</reference>
<reference key="2">
    <citation type="journal article" date="1992" name="Arch. Virol.">
        <title>Characterization of viral DNAs from cells infected with chicken anaemia agent: sequence analysis of the cloned replicative form and transfection capabilities of cloned genome fragments.</title>
        <authorList>
            <person name="Meehan B.M."/>
            <person name="Todd D."/>
            <person name="Creelan J.L."/>
            <person name="Earle J.A.P."/>
            <person name="Hoey E.M."/>
            <person name="McNulty M.S."/>
        </authorList>
    </citation>
    <scope>NUCLEOTIDE SEQUENCE [GENOMIC DNA]</scope>
</reference>
<reference key="3">
    <citation type="journal article" date="1995" name="J. Gen. Virol.">
        <title>Identification of a 24 kDa protein expressed by chicken anaemia virus.</title>
        <authorList>
            <person name="Douglas A.J."/>
            <person name="Phenix K."/>
            <person name="Mawhinney K.A."/>
            <person name="Todd D."/>
            <person name="Mackie D.P."/>
            <person name="Curran W.L."/>
        </authorList>
    </citation>
    <scope>INDUCTION</scope>
</reference>
<organismHost>
    <name type="scientific">Gallus gallus</name>
    <name type="common">Chicken</name>
    <dbReference type="NCBI Taxonomy" id="9031"/>
</organismHost>
<feature type="chain" id="PRO_0000223008" description="Apoptin">
    <location>
        <begin position="1"/>
        <end position="121"/>
    </location>
</feature>
<feature type="region of interest" description="Disordered" evidence="1">
    <location>
        <begin position="1"/>
        <end position="28"/>
    </location>
</feature>
<feature type="region of interest" description="Disordered" evidence="1">
    <location>
        <begin position="57"/>
        <end position="121"/>
    </location>
</feature>
<feature type="compositionally biased region" description="Polar residues" evidence="1">
    <location>
        <begin position="58"/>
        <end position="70"/>
    </location>
</feature>
<feature type="compositionally biased region" description="Basic and acidic residues" evidence="1">
    <location>
        <begin position="88"/>
        <end position="102"/>
    </location>
</feature>
<feature type="sequence conflict" description="In Ref. 2; AAA42883." evidence="3" ref="2">
    <original>F</original>
    <variation>S</variation>
    <location>
        <position position="70"/>
    </location>
</feature>
<feature type="sequence conflict" description="In Ref. 2." evidence="3" ref="2">
    <original>K</original>
    <variation>R</variation>
    <location>
        <position position="116"/>
    </location>
</feature>
<feature type="sequence conflict" description="In Ref. 2." evidence="3" ref="2">
    <original>R</original>
    <variation>C</variation>
    <location>
        <position position="118"/>
    </location>
</feature>
<organism>
    <name type="scientific">Chicken anemia virus (isolate Germany Cuxhaven-1)</name>
    <name type="common">CAV</name>
    <dbReference type="NCBI Taxonomy" id="73475"/>
    <lineage>
        <taxon>Viruses</taxon>
        <taxon>Viruses incertae sedis</taxon>
        <taxon>Anelloviridae</taxon>
        <taxon>Gyrovirus</taxon>
        <taxon>Gyrovirus chickenanemia</taxon>
    </lineage>
</organism>
<accession>Q99152</accession>
<gene>
    <name type="primary">VP3</name>
</gene>
<comment type="function">
    <text>May act as transcriptional regulator. Induces apoptosis in infected cells. Element of infectious replication cycle.</text>
</comment>
<comment type="interaction">
    <interactant intactId="EBI-1776808">
        <id>Q99152</id>
    </interactant>
    <interactant intactId="EBI-79464">
        <id>P27986</id>
        <label>PIK3R1</label>
    </interactant>
    <organismsDiffer>true</organismsDiffer>
    <experiments>3</experiments>
</comment>
<comment type="interaction">
    <interactant intactId="EBI-1776808">
        <id>Q99152</id>
    </interactant>
    <interactant intactId="EBI-751051">
        <id>Q9H2H8</id>
        <label>PPIL3</label>
    </interactant>
    <organismsDiffer>true</organismsDiffer>
    <experiments>3</experiments>
</comment>
<comment type="subcellular location">
    <subcellularLocation>
        <location>Host nucleus</location>
    </subcellularLocation>
    <text>Host nucleus of infected cells.</text>
</comment>
<comment type="induction">
    <text evidence="2">VP1 and VP2 are detected 12 hours post infection, while VP3 only after 24 hours.</text>
</comment>
<comment type="similarity">
    <text evidence="3">Belongs to the gyrovirus apoptin family.</text>
</comment>
<sequence length="121" mass="13270">MNALQEDTPPGPSTVFRPPTSSRPLETPHCREIRIGIAGITITLSLCGCANARAPTLRSATADNSESTGFKNVPDLRTDQPKPPSKKRSCDPSEYRVSELKESLITTTPSRPRTAKRRIRL</sequence>
<keyword id="KW-0053">Apoptosis</keyword>
<keyword id="KW-0244">Early protein</keyword>
<keyword id="KW-1048">Host nucleus</keyword>
<keyword id="KW-0945">Host-virus interaction</keyword>
<keyword id="KW-1098">Inhibition of host mitotic exit by virus</keyword>
<keyword id="KW-1121">Modulation of host cell cycle by virus</keyword>
<keyword id="KW-1185">Reference proteome</keyword>
<name>VP3_CAVC1</name>
<proteinExistence type="evidence at protein level"/>